<feature type="chain" id="PRO_0000076154" description="Archaeal Lon protease">
    <location>
        <begin position="1"/>
        <end position="657"/>
    </location>
</feature>
<feature type="topological domain" description="Cytoplasmic" evidence="2">
    <location>
        <begin position="1"/>
        <end position="123"/>
    </location>
</feature>
<feature type="transmembrane region" description="Helical" evidence="2">
    <location>
        <begin position="124"/>
        <end position="144"/>
    </location>
</feature>
<feature type="topological domain" description="Extracellular" evidence="2">
    <location>
        <position position="145"/>
    </location>
</feature>
<feature type="transmembrane region" description="Helical" evidence="2">
    <location>
        <begin position="146"/>
        <end position="166"/>
    </location>
</feature>
<feature type="topological domain" description="Cytoplasmic" evidence="2">
    <location>
        <begin position="167"/>
        <end position="657"/>
    </location>
</feature>
<feature type="domain" description="Lon proteolytic" evidence="3">
    <location>
        <begin position="433"/>
        <end position="618"/>
    </location>
</feature>
<feature type="active site" evidence="1">
    <location>
        <position position="525"/>
    </location>
</feature>
<feature type="active site" evidence="1">
    <location>
        <position position="568"/>
    </location>
</feature>
<feature type="binding site" evidence="2">
    <location>
        <begin position="57"/>
        <end position="64"/>
    </location>
    <ligand>
        <name>ATP</name>
        <dbReference type="ChEBI" id="CHEBI:30616"/>
    </ligand>
</feature>
<feature type="mutagenesis site" description="Completely abolishes ATPase activity and makes peptidase activity independent on ATP stimulus." evidence="4">
    <original>K</original>
    <variation>A</variation>
    <location>
        <position position="63"/>
    </location>
</feature>
<feature type="mutagenesis site" description="Retains 5% ATPase activity. Proteolytic activity is greatly impaired and cannot be stimulated by nucleotides." evidence="4">
    <original>D</original>
    <variation>A</variation>
    <location>
        <position position="241"/>
    </location>
</feature>
<feature type="mutagenesis site" description="Severely reduces ATPase and proteolytic activity." evidence="4">
    <original>N</original>
    <variation>A</variation>
    <location>
        <position position="293"/>
    </location>
</feature>
<feature type="mutagenesis site" description="Decreases ATPase activity. Completely abolishes peptidase activity in the absence of ATP, but ATP-stimulated peptidase activity i close to wild-type levels." evidence="4">
    <original>R</original>
    <variation>A</variation>
    <location>
        <position position="305"/>
    </location>
</feature>
<feature type="mutagenesis site" description="Almost completely abolishes ATPase activity and severely reduces proteolytic activity." evidence="4">
    <original>R</original>
    <variation>A</variation>
    <location>
        <position position="375"/>
    </location>
</feature>
<feature type="mutagenesis site" description="Decreases ATPase activity. Completely abolishes peptidase activity in the absence of ATP, but ATP-stimulated peptidase activity i close to wild-type levels." evidence="4">
    <original>R</original>
    <variation>A</variation>
    <location>
        <position position="382"/>
    </location>
</feature>
<feature type="mutagenesis site" description="Abolishes peptidase activity, but retains ATPase activity." evidence="5">
    <original>S</original>
    <variation>A</variation>
    <location>
        <position position="525"/>
    </location>
</feature>
<feature type="mutagenesis site" description="Abolishes peptidase activity, but retains ATPase activity." evidence="5">
    <original>K</original>
    <variation>A</variation>
    <location>
        <position position="568"/>
    </location>
</feature>
<proteinExistence type="evidence at protein level"/>
<name>LONB_THEAC</name>
<gene>
    <name type="ordered locus">Ta1081</name>
</gene>
<accession>Q9HJ89</accession>
<protein>
    <recommendedName>
        <fullName>Archaeal Lon protease</fullName>
        <ecNumber>3.4.21.-</ecNumber>
    </recommendedName>
    <alternativeName>
        <fullName>ATP-dependent protease La homolog</fullName>
    </alternativeName>
</protein>
<dbReference type="EC" id="3.4.21.-"/>
<dbReference type="EMBL" id="AL445066">
    <property type="protein sequence ID" value="CAC12209.1"/>
    <property type="molecule type" value="Genomic_DNA"/>
</dbReference>
<dbReference type="RefSeq" id="WP_010901491.1">
    <property type="nucleotide sequence ID" value="NC_002578.1"/>
</dbReference>
<dbReference type="SMR" id="Q9HJ89"/>
<dbReference type="STRING" id="273075.gene:9572302"/>
<dbReference type="MEROPS" id="S16.A11"/>
<dbReference type="PaxDb" id="273075-Ta1081"/>
<dbReference type="EnsemblBacteria" id="CAC12209">
    <property type="protein sequence ID" value="CAC12209"/>
    <property type="gene ID" value="CAC12209"/>
</dbReference>
<dbReference type="KEGG" id="tac:Ta1081"/>
<dbReference type="eggNOG" id="arCOG02160">
    <property type="taxonomic scope" value="Archaea"/>
</dbReference>
<dbReference type="HOGENOM" id="CLU_392630_0_0_2"/>
<dbReference type="InParanoid" id="Q9HJ89"/>
<dbReference type="OrthoDB" id="64652at2157"/>
<dbReference type="BRENDA" id="3.4.21.53">
    <property type="organism ID" value="6324"/>
</dbReference>
<dbReference type="SABIO-RK" id="Q9HJ89"/>
<dbReference type="Proteomes" id="UP000001024">
    <property type="component" value="Chromosome"/>
</dbReference>
<dbReference type="GO" id="GO:0005886">
    <property type="term" value="C:plasma membrane"/>
    <property type="evidence" value="ECO:0007669"/>
    <property type="project" value="UniProtKB-SubCell"/>
</dbReference>
<dbReference type="GO" id="GO:0005524">
    <property type="term" value="F:ATP binding"/>
    <property type="evidence" value="ECO:0007669"/>
    <property type="project" value="UniProtKB-KW"/>
</dbReference>
<dbReference type="GO" id="GO:0016887">
    <property type="term" value="F:ATP hydrolysis activity"/>
    <property type="evidence" value="ECO:0007669"/>
    <property type="project" value="InterPro"/>
</dbReference>
<dbReference type="GO" id="GO:0004176">
    <property type="term" value="F:ATP-dependent peptidase activity"/>
    <property type="evidence" value="ECO:0007669"/>
    <property type="project" value="InterPro"/>
</dbReference>
<dbReference type="GO" id="GO:0004252">
    <property type="term" value="F:serine-type endopeptidase activity"/>
    <property type="evidence" value="ECO:0007669"/>
    <property type="project" value="InterPro"/>
</dbReference>
<dbReference type="GO" id="GO:0030163">
    <property type="term" value="P:protein catabolic process"/>
    <property type="evidence" value="ECO:0007669"/>
    <property type="project" value="InterPro"/>
</dbReference>
<dbReference type="GO" id="GO:0006508">
    <property type="term" value="P:proteolysis"/>
    <property type="evidence" value="ECO:0007669"/>
    <property type="project" value="UniProtKB-KW"/>
</dbReference>
<dbReference type="GO" id="GO:0006355">
    <property type="term" value="P:regulation of DNA-templated transcription"/>
    <property type="evidence" value="ECO:0007669"/>
    <property type="project" value="InterPro"/>
</dbReference>
<dbReference type="Gene3D" id="1.10.8.60">
    <property type="match status" value="1"/>
</dbReference>
<dbReference type="Gene3D" id="3.30.230.10">
    <property type="match status" value="1"/>
</dbReference>
<dbReference type="Gene3D" id="3.40.50.300">
    <property type="entry name" value="P-loop containing nucleotide triphosphate hydrolases"/>
    <property type="match status" value="2"/>
</dbReference>
<dbReference type="InterPro" id="IPR003593">
    <property type="entry name" value="AAA+_ATPase"/>
</dbReference>
<dbReference type="InterPro" id="IPR004663">
    <property type="entry name" value="Lon_arc"/>
</dbReference>
<dbReference type="InterPro" id="IPR008269">
    <property type="entry name" value="Lon_proteolytic"/>
</dbReference>
<dbReference type="InterPro" id="IPR027065">
    <property type="entry name" value="Lon_Prtase"/>
</dbReference>
<dbReference type="InterPro" id="IPR046843">
    <property type="entry name" value="LonB_AAA-LID"/>
</dbReference>
<dbReference type="InterPro" id="IPR000523">
    <property type="entry name" value="Mg_chelatse_chII-like_cat_dom"/>
</dbReference>
<dbReference type="InterPro" id="IPR027417">
    <property type="entry name" value="P-loop_NTPase"/>
</dbReference>
<dbReference type="InterPro" id="IPR020568">
    <property type="entry name" value="Ribosomal_Su5_D2-typ_SF"/>
</dbReference>
<dbReference type="InterPro" id="IPR014721">
    <property type="entry name" value="Ribsml_uS5_D2-typ_fold_subgr"/>
</dbReference>
<dbReference type="InterPro" id="IPR002078">
    <property type="entry name" value="Sigma_54_int"/>
</dbReference>
<dbReference type="NCBIfam" id="TIGR00764">
    <property type="entry name" value="lon_rel"/>
    <property type="match status" value="1"/>
</dbReference>
<dbReference type="PANTHER" id="PTHR10046">
    <property type="entry name" value="ATP DEPENDENT LON PROTEASE FAMILY MEMBER"/>
    <property type="match status" value="1"/>
</dbReference>
<dbReference type="Pfam" id="PF05362">
    <property type="entry name" value="Lon_C"/>
    <property type="match status" value="1"/>
</dbReference>
<dbReference type="Pfam" id="PF20436">
    <property type="entry name" value="LonB_AAA-LID"/>
    <property type="match status" value="1"/>
</dbReference>
<dbReference type="Pfam" id="PF01078">
    <property type="entry name" value="Mg_chelatase"/>
    <property type="match status" value="1"/>
</dbReference>
<dbReference type="Pfam" id="PF00158">
    <property type="entry name" value="Sigma54_activat"/>
    <property type="match status" value="1"/>
</dbReference>
<dbReference type="PRINTS" id="PR00830">
    <property type="entry name" value="ENDOLAPTASE"/>
</dbReference>
<dbReference type="SMART" id="SM00382">
    <property type="entry name" value="AAA"/>
    <property type="match status" value="1"/>
</dbReference>
<dbReference type="SUPFAM" id="SSF52540">
    <property type="entry name" value="P-loop containing nucleoside triphosphate hydrolases"/>
    <property type="match status" value="1"/>
</dbReference>
<dbReference type="SUPFAM" id="SSF54211">
    <property type="entry name" value="Ribosomal protein S5 domain 2-like"/>
    <property type="match status" value="1"/>
</dbReference>
<dbReference type="PROSITE" id="PS51786">
    <property type="entry name" value="LON_PROTEOLYTIC"/>
    <property type="match status" value="1"/>
</dbReference>
<comment type="function">
    <text evidence="4 5">ATP-dependent serine protease that mediates the selective degradation of mutant and abnormal proteins as well as certain short-lived regulatory proteins. Degrades polypeptides processively.</text>
</comment>
<comment type="biophysicochemical properties">
    <kinetics>
        <KM evidence="5">0.196 mM for ATP</KM>
    </kinetics>
</comment>
<comment type="subunit">
    <text evidence="5">Homohexamer. Organized in a ring with a central cavity.</text>
</comment>
<comment type="subcellular location">
    <subcellularLocation>
        <location evidence="6">Cell membrane</location>
        <topology evidence="6">Multi-pass membrane protein</topology>
    </subcellularLocation>
</comment>
<comment type="similarity">
    <text evidence="6">Belongs to the peptidase S16 family. Archaeal LonB subfamily.</text>
</comment>
<organism>
    <name type="scientific">Thermoplasma acidophilum (strain ATCC 25905 / DSM 1728 / JCM 9062 / NBRC 15155 / AMRC-C165)</name>
    <dbReference type="NCBI Taxonomy" id="273075"/>
    <lineage>
        <taxon>Archaea</taxon>
        <taxon>Methanobacteriati</taxon>
        <taxon>Thermoplasmatota</taxon>
        <taxon>Thermoplasmata</taxon>
        <taxon>Thermoplasmatales</taxon>
        <taxon>Thermoplasmataceae</taxon>
        <taxon>Thermoplasma</taxon>
    </lineage>
</organism>
<keyword id="KW-0067">ATP-binding</keyword>
<keyword id="KW-1003">Cell membrane</keyword>
<keyword id="KW-0378">Hydrolase</keyword>
<keyword id="KW-0472">Membrane</keyword>
<keyword id="KW-0547">Nucleotide-binding</keyword>
<keyword id="KW-0645">Protease</keyword>
<keyword id="KW-1185">Reference proteome</keyword>
<keyword id="KW-0720">Serine protease</keyword>
<keyword id="KW-0812">Transmembrane</keyword>
<keyword id="KW-1133">Transmembrane helix</keyword>
<reference key="1">
    <citation type="journal article" date="2000" name="Nature">
        <title>The genome sequence of the thermoacidophilic scavenger Thermoplasma acidophilum.</title>
        <authorList>
            <person name="Ruepp A."/>
            <person name="Graml W."/>
            <person name="Santos-Martinez M.-L."/>
            <person name="Koretke K.K."/>
            <person name="Volker C."/>
            <person name="Mewes H.-W."/>
            <person name="Frishman D."/>
            <person name="Stocker S."/>
            <person name="Lupas A.N."/>
            <person name="Baumeister W."/>
        </authorList>
    </citation>
    <scope>NUCLEOTIDE SEQUENCE [LARGE SCALE GENOMIC DNA]</scope>
    <source>
        <strain>ATCC 25905 / DSM 1728 / JCM 9062 / NBRC 15155 / AMRC-C165</strain>
    </source>
</reference>
<reference key="2">
    <citation type="journal article" date="2004" name="Eur. J. Biochem.">
        <title>The Thermoplasma acidophilum Lon protease has a Ser-Lys dyad active site.</title>
        <authorList>
            <person name="Besche H."/>
            <person name="Zwickl P."/>
        </authorList>
    </citation>
    <scope>FUNCTION</scope>
    <scope>SUBUNIT</scope>
    <scope>MUTAGENESIS OF SER-525 AND LYS-568</scope>
    <scope>BIOPHYSICOCHEMICAL PROPERTIES</scope>
</reference>
<reference key="3">
    <citation type="journal article" date="2004" name="FEBS Lett.">
        <title>Mutational analysis of conserved AAA+ residues in the archaeal Lon protease from Thermoplasma acidophilum.</title>
        <authorList>
            <person name="Besche H."/>
            <person name="Tamura N."/>
            <person name="Tamura T."/>
            <person name="Zwickl P."/>
        </authorList>
    </citation>
    <scope>FUNCTION</scope>
    <scope>SUBCELLULAR LOCATION</scope>
    <scope>MUTAGENESIS OF LYS-63; ASP-241; ASN-293; ARG-305; ARG-375 AND ARG-382</scope>
</reference>
<evidence type="ECO:0000250" key="1"/>
<evidence type="ECO:0000255" key="2"/>
<evidence type="ECO:0000255" key="3">
    <source>
        <dbReference type="PROSITE-ProRule" id="PRU01122"/>
    </source>
</evidence>
<evidence type="ECO:0000269" key="4">
    <source>
    </source>
</evidence>
<evidence type="ECO:0000269" key="5">
    <source>
    </source>
</evidence>
<evidence type="ECO:0000305" key="6"/>
<sequence>MEENIESVEEWVNKLDIETTKDIHVPKLLFDQVIGQDQAGEIVKKAALQRRHVILIGEPGTGKSMLAQSMVDFLPKSELEDILVFPNPEDPNKPKIKTVPAGKGKEIVRQYQIKAEREKRDRSRSIMFVIFSVVLLGIIAAIVLRSITLIFFAIMAAAFLYMAMAFNPVIRNERAMVPKLLVSHNPNDKPPFVDSTGAHSGALLGDVRHDPFQSGGLETPAHERVEAGNIHKAHKGVLFIDEINLLRPEDQQAILTALQEKKYPISGQSERSAGAMVQTEPVPCDFVLVAAGNYDAIRNMHPALRSRIRGYGYEVVVNDYMDDNDENRRKLVQFIAQEVEKDKKIPHFDKSAIIEVIKEAQKRSGRRNKLTLRLRELGGLVRVAGDIAVSQKKTVVTAADVIAAKNLAKPLEQQIADRSIEIKKIYKTFRTEGSVVGMVNGLAVVGADTGMSEYTGVVLPIVAEVTPAEHKGAGNIIATGKLGDIAKEAVLNVSAVFKKLTGKDISNMDIHIQFVGTYEGVEGDSASVSIATAVISAIENIPVDQSVAMTGSLSVRGDVLPVGGVTAKVEAAIEAGLNKVIVPELNYSDIILDADHVNKIEIIPAKTIEDVLRVALVNSPEKEKLFDRISNLINAAKIIKPQRPATPATTRAGNNAA</sequence>